<feature type="chain" id="PRO_0000214760" description="Sodium-dependent serotonin transporter">
    <location>
        <begin position="1"/>
        <end position="630"/>
    </location>
</feature>
<feature type="topological domain" description="Cytoplasmic" evidence="21">
    <location>
        <begin position="1"/>
        <end position="87"/>
    </location>
</feature>
<feature type="transmembrane region" description="Helical; Name=1" evidence="2">
    <location>
        <begin position="88"/>
        <end position="112"/>
    </location>
</feature>
<feature type="topological domain" description="Extracellular" evidence="21">
    <location>
        <begin position="113"/>
        <end position="115"/>
    </location>
</feature>
<feature type="transmembrane region" description="Helical; Name=2" evidence="2">
    <location>
        <begin position="116"/>
        <end position="135"/>
    </location>
</feature>
<feature type="topological domain" description="Cytoplasmic" evidence="21">
    <location>
        <begin position="136"/>
        <end position="160"/>
    </location>
</feature>
<feature type="transmembrane region" description="Helical; Name=3" evidence="2">
    <location>
        <begin position="161"/>
        <end position="186"/>
    </location>
</feature>
<feature type="topological domain" description="Extracellular" evidence="21">
    <location>
        <begin position="187"/>
        <end position="252"/>
    </location>
</feature>
<feature type="transmembrane region" description="Helical; Name=4" evidence="2">
    <location>
        <begin position="253"/>
        <end position="271"/>
    </location>
</feature>
<feature type="topological domain" description="Cytoplasmic" evidence="21">
    <location>
        <begin position="272"/>
        <end position="277"/>
    </location>
</feature>
<feature type="transmembrane region" description="Helical; Name=5" evidence="2">
    <location>
        <begin position="278"/>
        <end position="297"/>
    </location>
</feature>
<feature type="topological domain" description="Extracellular" evidence="21">
    <location>
        <begin position="298"/>
        <end position="324"/>
    </location>
</feature>
<feature type="transmembrane region" description="Helical; Name=6" evidence="2">
    <location>
        <begin position="325"/>
        <end position="347"/>
    </location>
</feature>
<feature type="topological domain" description="Cytoplasmic" evidence="21">
    <location>
        <begin position="348"/>
        <end position="360"/>
    </location>
</feature>
<feature type="transmembrane region" description="Helical; Name=7" evidence="2">
    <location>
        <begin position="361"/>
        <end position="380"/>
    </location>
</feature>
<feature type="topological domain" description="Extracellular" evidence="21">
    <location>
        <begin position="381"/>
        <end position="421"/>
    </location>
</feature>
<feature type="transmembrane region" description="Helical; Name=8" evidence="2">
    <location>
        <begin position="422"/>
        <end position="443"/>
    </location>
</feature>
<feature type="topological domain" description="Cytoplasmic" evidence="21">
    <location>
        <begin position="444"/>
        <end position="463"/>
    </location>
</feature>
<feature type="transmembrane region" description="Helical; Name=9" evidence="2">
    <location>
        <begin position="464"/>
        <end position="483"/>
    </location>
</feature>
<feature type="topological domain" description="Extracellular" evidence="21">
    <location>
        <begin position="484"/>
        <end position="494"/>
    </location>
</feature>
<feature type="transmembrane region" description="Helical; Name=10" evidence="2">
    <location>
        <begin position="495"/>
        <end position="516"/>
    </location>
</feature>
<feature type="topological domain" description="Cytoplasmic" evidence="21">
    <location>
        <begin position="517"/>
        <end position="538"/>
    </location>
</feature>
<feature type="transmembrane region" description="Helical; Name=11" evidence="2">
    <location>
        <begin position="539"/>
        <end position="558"/>
    </location>
</feature>
<feature type="topological domain" description="Extracellular" evidence="21">
    <location>
        <begin position="559"/>
        <end position="574"/>
    </location>
</feature>
<feature type="transmembrane region" description="Helical; Name=12" evidence="2">
    <location>
        <begin position="575"/>
        <end position="595"/>
    </location>
</feature>
<feature type="topological domain" description="Cytoplasmic" evidence="21">
    <location>
        <begin position="596"/>
        <end position="630"/>
    </location>
</feature>
<feature type="region of interest" description="Disordered" evidence="6">
    <location>
        <begin position="23"/>
        <end position="60"/>
    </location>
</feature>
<feature type="region of interest" description="Interaction with RAB4A" evidence="1">
    <location>
        <begin position="616"/>
        <end position="624"/>
    </location>
</feature>
<feature type="compositionally biased region" description="Polar residues" evidence="6">
    <location>
        <begin position="41"/>
        <end position="55"/>
    </location>
</feature>
<feature type="binding site" evidence="4">
    <location>
        <position position="94"/>
    </location>
    <ligand>
        <name>Na(+)</name>
        <dbReference type="ChEBI" id="CHEBI:29101"/>
        <label>1</label>
    </ligand>
</feature>
<feature type="binding site" evidence="4">
    <location>
        <position position="96"/>
    </location>
    <ligand>
        <name>Na(+)</name>
        <dbReference type="ChEBI" id="CHEBI:29101"/>
        <label>2</label>
    </ligand>
</feature>
<feature type="binding site" evidence="4">
    <location>
        <position position="97"/>
    </location>
    <ligand>
        <name>Na(+)</name>
        <dbReference type="ChEBI" id="CHEBI:29101"/>
        <label>1</label>
    </ligand>
</feature>
<feature type="binding site" evidence="2">
    <location>
        <position position="98"/>
    </location>
    <ligand>
        <name>Na(+)</name>
        <dbReference type="ChEBI" id="CHEBI:29101"/>
        <label>2</label>
    </ligand>
</feature>
<feature type="binding site" evidence="2">
    <location>
        <position position="98"/>
    </location>
    <ligand>
        <name>serotonin</name>
        <dbReference type="ChEBI" id="CHEBI:350546"/>
    </ligand>
</feature>
<feature type="binding site" evidence="4">
    <location>
        <position position="101"/>
    </location>
    <ligand>
        <name>Na(+)</name>
        <dbReference type="ChEBI" id="CHEBI:29101"/>
        <label>2</label>
    </ligand>
</feature>
<feature type="binding site" evidence="4">
    <location>
        <position position="336"/>
    </location>
    <ligand>
        <name>Na(+)</name>
        <dbReference type="ChEBI" id="CHEBI:29101"/>
        <label>2</label>
    </ligand>
</feature>
<feature type="binding site" evidence="4">
    <location>
        <position position="368"/>
    </location>
    <ligand>
        <name>Na(+)</name>
        <dbReference type="ChEBI" id="CHEBI:29101"/>
        <label>2</label>
    </ligand>
</feature>
<feature type="binding site" evidence="4">
    <location>
        <position position="434"/>
    </location>
    <ligand>
        <name>Na(+)</name>
        <dbReference type="ChEBI" id="CHEBI:29101"/>
        <label>1</label>
    </ligand>
</feature>
<feature type="binding site" evidence="4">
    <location>
        <position position="437"/>
    </location>
    <ligand>
        <name>Na(+)</name>
        <dbReference type="ChEBI" id="CHEBI:29101"/>
        <label>1</label>
    </ligand>
</feature>
<feature type="binding site" evidence="4">
    <location>
        <position position="438"/>
    </location>
    <ligand>
        <name>Na(+)</name>
        <dbReference type="ChEBI" id="CHEBI:29101"/>
        <label>1</label>
    </ligand>
</feature>
<feature type="binding site" evidence="2">
    <location>
        <position position="439"/>
    </location>
    <ligand>
        <name>serotonin</name>
        <dbReference type="ChEBI" id="CHEBI:350546"/>
    </ligand>
</feature>
<feature type="binding site" evidence="2">
    <location>
        <position position="494"/>
    </location>
    <ligand>
        <name>serotonin</name>
        <dbReference type="ChEBI" id="CHEBI:350546"/>
    </ligand>
</feature>
<feature type="binding site" evidence="2">
    <location>
        <position position="495"/>
    </location>
    <ligand>
        <name>serotonin</name>
        <dbReference type="ChEBI" id="CHEBI:350546"/>
    </ligand>
</feature>
<feature type="binding site" evidence="2">
    <location>
        <position position="556"/>
    </location>
    <ligand>
        <name>serotonin</name>
        <dbReference type="ChEBI" id="CHEBI:350546"/>
    </ligand>
</feature>
<feature type="binding site" evidence="2">
    <location>
        <position position="559"/>
    </location>
    <ligand>
        <name>serotonin</name>
        <dbReference type="ChEBI" id="CHEBI:350546"/>
    </ligand>
</feature>
<feature type="modified residue" description="Phosphotyrosine" evidence="2">
    <location>
        <position position="47"/>
    </location>
</feature>
<feature type="modified residue" description="Phosphotyrosine" evidence="2">
    <location>
        <position position="142"/>
    </location>
</feature>
<feature type="modified residue" description="Phosphothreonine" evidence="14">
    <location>
        <position position="276"/>
    </location>
</feature>
<feature type="glycosylation site" description="N-linked (GlcNAc...) asparagine" evidence="2">
    <location>
        <position position="208"/>
    </location>
</feature>
<feature type="glycosylation site" description="N-linked (GlcNAc...) asparagine" evidence="2">
    <location>
        <position position="217"/>
    </location>
</feature>
<feature type="disulfide bond" evidence="2">
    <location>
        <begin position="200"/>
        <end position="209"/>
    </location>
</feature>
<feature type="mutagenesis site" description="Abolishes the interaction with STX1A." evidence="11">
    <original>ECKDREDCQE</original>
    <variation>ACKARAACQA</variation>
    <location>
        <begin position="14"/>
        <end position="23"/>
    </location>
</feature>
<feature type="mutagenesis site" description="Disrupts chloride ion dependence of serotonin transport." evidence="17">
    <original>N</original>
    <variation>A</variation>
    <location>
        <position position="101"/>
    </location>
</feature>
<feature type="mutagenesis site" description="Cocaine is effective at blocking transport." evidence="8">
    <original>C</original>
    <variation>A</variation>
    <location>
        <position position="109"/>
    </location>
</feature>
<feature type="mutagenesis site" description="Cocaine is effective at blocking transport." evidence="8">
    <original>I</original>
    <variation>C</variation>
    <location>
        <position position="172"/>
    </location>
</feature>
<feature type="mutagenesis site" description="Increases channel conductance." evidence="19">
    <original>N</original>
    <variation>G</variation>
    <location>
        <position position="177"/>
    </location>
</feature>
<feature type="mutagenesis site" description="Disrupts chloride ion dependence of serotonin transport; when associated with A-101." evidence="17">
    <original>S</original>
    <variation>C</variation>
    <location>
        <position position="277"/>
    </location>
</feature>
<feature type="mutagenesis site" description="Disrupts chloride ion dependence of serotonin transport; when associated with A-101." evidence="17">
    <original>S</original>
    <variation>C</variation>
    <location>
        <position position="404"/>
    </location>
</feature>
<feature type="sequence conflict" description="In Ref. 4; AAA42186." evidence="21" ref="4">
    <original>A</original>
    <variation>G</variation>
    <location>
        <position position="415"/>
    </location>
</feature>
<feature type="sequence conflict" description="In Ref. 4; AAA42186." evidence="21" ref="4">
    <original>PGWF</original>
    <variation>GMV</variation>
    <location>
        <begin position="533"/>
        <end position="536"/>
    </location>
</feature>
<feature type="sequence conflict" description="In Ref. 4; AAA42186." evidence="21" ref="4">
    <original>PCGDIRMNAV</original>
    <variation>RVGHPHECCVTHPGRGHLFPATSLSSEKPTGLLL</variation>
    <location>
        <begin position="621"/>
        <end position="630"/>
    </location>
</feature>
<keyword id="KW-0050">Antiport</keyword>
<keyword id="KW-0965">Cell junction</keyword>
<keyword id="KW-1003">Cell membrane</keyword>
<keyword id="KW-0966">Cell projection</keyword>
<keyword id="KW-1015">Disulfide bond</keyword>
<keyword id="KW-0967">Endosome</keyword>
<keyword id="KW-0325">Glycoprotein</keyword>
<keyword id="KW-0472">Membrane</keyword>
<keyword id="KW-0479">Metal-binding</keyword>
<keyword id="KW-0532">Neurotransmitter transport</keyword>
<keyword id="KW-0597">Phosphoprotein</keyword>
<keyword id="KW-1185">Reference proteome</keyword>
<keyword id="KW-0915">Sodium</keyword>
<keyword id="KW-0770">Synapse</keyword>
<keyword id="KW-0812">Transmembrane</keyword>
<keyword id="KW-1133">Transmembrane helix</keyword>
<keyword id="KW-0813">Transport</keyword>
<protein>
    <recommendedName>
        <fullName>Sodium-dependent serotonin transporter</fullName>
        <shortName evidence="20">SERT</shortName>
    </recommendedName>
    <alternativeName>
        <fullName>5HT transporter</fullName>
        <shortName>5HTT</shortName>
    </alternativeName>
    <alternativeName>
        <fullName>Solute carrier family 6 member 4</fullName>
    </alternativeName>
</protein>
<dbReference type="EMBL" id="X63995">
    <property type="protein sequence ID" value="CAA45401.1"/>
    <property type="molecule type" value="mRNA"/>
</dbReference>
<dbReference type="EMBL" id="X63253">
    <property type="protein sequence ID" value="CAA44913.1"/>
    <property type="molecule type" value="mRNA"/>
</dbReference>
<dbReference type="EMBL" id="M79450">
    <property type="protein sequence ID" value="AAA42186.1"/>
    <property type="molecule type" value="mRNA"/>
</dbReference>
<dbReference type="EMBL" id="Y11024">
    <property type="protein sequence ID" value="CAA71909.1"/>
    <property type="molecule type" value="mRNA"/>
</dbReference>
<dbReference type="PIR" id="S19585">
    <property type="entry name" value="S19585"/>
</dbReference>
<dbReference type="PIR" id="S30604">
    <property type="entry name" value="S30604"/>
</dbReference>
<dbReference type="RefSeq" id="NP_037166.2">
    <property type="nucleotide sequence ID" value="NM_013034.4"/>
</dbReference>
<dbReference type="RefSeq" id="XP_008766172.1">
    <property type="nucleotide sequence ID" value="XM_008767950.4"/>
</dbReference>
<dbReference type="RefSeq" id="XP_017452530.1">
    <property type="nucleotide sequence ID" value="XM_017597041.3"/>
</dbReference>
<dbReference type="RefSeq" id="XP_017452531.1">
    <property type="nucleotide sequence ID" value="XM_017597042.3"/>
</dbReference>
<dbReference type="RefSeq" id="XP_017452532.1">
    <property type="nucleotide sequence ID" value="XM_017597043.1"/>
</dbReference>
<dbReference type="RefSeq" id="XP_038941216.1">
    <property type="nucleotide sequence ID" value="XM_039085288.2"/>
</dbReference>
<dbReference type="SMR" id="P31652"/>
<dbReference type="BioGRID" id="247584">
    <property type="interactions" value="2"/>
</dbReference>
<dbReference type="CORUM" id="P31652"/>
<dbReference type="FunCoup" id="P31652">
    <property type="interactions" value="185"/>
</dbReference>
<dbReference type="IntAct" id="P31652">
    <property type="interactions" value="1"/>
</dbReference>
<dbReference type="STRING" id="10116.ENSRNOP00000004717"/>
<dbReference type="BindingDB" id="P31652"/>
<dbReference type="ChEMBL" id="CHEMBL313"/>
<dbReference type="DrugCentral" id="P31652"/>
<dbReference type="GuidetoPHARMACOLOGY" id="928"/>
<dbReference type="GlyCosmos" id="P31652">
    <property type="glycosylation" value="2 sites, No reported glycans"/>
</dbReference>
<dbReference type="GlyGen" id="P31652">
    <property type="glycosylation" value="7 sites"/>
</dbReference>
<dbReference type="iPTMnet" id="P31652"/>
<dbReference type="PhosphoSitePlus" id="P31652"/>
<dbReference type="SwissPalm" id="P31652"/>
<dbReference type="PaxDb" id="10116-ENSRNOP00000004717"/>
<dbReference type="Ensembl" id="ENSRNOT00000004717.7">
    <property type="protein sequence ID" value="ENSRNOP00000004717.4"/>
    <property type="gene ID" value="ENSRNOG00000003476.8"/>
</dbReference>
<dbReference type="GeneID" id="25553"/>
<dbReference type="KEGG" id="rno:25553"/>
<dbReference type="AGR" id="RGD:3714"/>
<dbReference type="CTD" id="6532"/>
<dbReference type="RGD" id="3714">
    <property type="gene designation" value="Slc6a4"/>
</dbReference>
<dbReference type="eggNOG" id="KOG3659">
    <property type="taxonomic scope" value="Eukaryota"/>
</dbReference>
<dbReference type="GeneTree" id="ENSGT00940000157855"/>
<dbReference type="HOGENOM" id="CLU_006855_9_0_1"/>
<dbReference type="InParanoid" id="P31652"/>
<dbReference type="OMA" id="GEDCQGN"/>
<dbReference type="OrthoDB" id="6581954at2759"/>
<dbReference type="PhylomeDB" id="P31652"/>
<dbReference type="TreeFam" id="TF343812"/>
<dbReference type="Reactome" id="R-RNO-380615">
    <property type="pathway name" value="Serotonin clearance from the synaptic cleft"/>
</dbReference>
<dbReference type="PRO" id="PR:P31652"/>
<dbReference type="Proteomes" id="UP000002494">
    <property type="component" value="Chromosome 10"/>
</dbReference>
<dbReference type="Bgee" id="ENSRNOG00000003476">
    <property type="expression patterns" value="Expressed in duodenum and 16 other cell types or tissues"/>
</dbReference>
<dbReference type="GO" id="GO:0012505">
    <property type="term" value="C:endomembrane system"/>
    <property type="evidence" value="ECO:0000314"/>
    <property type="project" value="UniProtKB"/>
</dbReference>
<dbReference type="GO" id="GO:0010008">
    <property type="term" value="C:endosome membrane"/>
    <property type="evidence" value="ECO:0007669"/>
    <property type="project" value="UniProtKB-SubCell"/>
</dbReference>
<dbReference type="GO" id="GO:0005925">
    <property type="term" value="C:focal adhesion"/>
    <property type="evidence" value="ECO:0000250"/>
    <property type="project" value="UniProtKB"/>
</dbReference>
<dbReference type="GO" id="GO:0045121">
    <property type="term" value="C:membrane raft"/>
    <property type="evidence" value="ECO:0000266"/>
    <property type="project" value="RGD"/>
</dbReference>
<dbReference type="GO" id="GO:0043005">
    <property type="term" value="C:neuron projection"/>
    <property type="evidence" value="ECO:0000318"/>
    <property type="project" value="GO_Central"/>
</dbReference>
<dbReference type="GO" id="GO:0005886">
    <property type="term" value="C:plasma membrane"/>
    <property type="evidence" value="ECO:0000314"/>
    <property type="project" value="UniProtKB"/>
</dbReference>
<dbReference type="GO" id="GO:0045211">
    <property type="term" value="C:postsynaptic membrane"/>
    <property type="evidence" value="ECO:0000314"/>
    <property type="project" value="SynGO"/>
</dbReference>
<dbReference type="GO" id="GO:0042734">
    <property type="term" value="C:presynaptic membrane"/>
    <property type="evidence" value="ECO:0000314"/>
    <property type="project" value="SynGO"/>
</dbReference>
<dbReference type="GO" id="GO:0099154">
    <property type="term" value="C:serotonergic synapse"/>
    <property type="evidence" value="ECO:0000314"/>
    <property type="project" value="SynGO"/>
</dbReference>
<dbReference type="GO" id="GO:0045202">
    <property type="term" value="C:synapse"/>
    <property type="evidence" value="ECO:0000250"/>
    <property type="project" value="UniProtKB"/>
</dbReference>
<dbReference type="GO" id="GO:0051015">
    <property type="term" value="F:actin filament binding"/>
    <property type="evidence" value="ECO:0000314"/>
    <property type="project" value="UniProtKB"/>
</dbReference>
<dbReference type="GO" id="GO:0015297">
    <property type="term" value="F:antiporter activity"/>
    <property type="evidence" value="ECO:0000266"/>
    <property type="project" value="RGD"/>
</dbReference>
<dbReference type="GO" id="GO:0019811">
    <property type="term" value="F:cocaine binding"/>
    <property type="evidence" value="ECO:0000315"/>
    <property type="project" value="RGD"/>
</dbReference>
<dbReference type="GO" id="GO:0042802">
    <property type="term" value="F:identical protein binding"/>
    <property type="evidence" value="ECO:0000353"/>
    <property type="project" value="UniProtKB"/>
</dbReference>
<dbReference type="GO" id="GO:0005178">
    <property type="term" value="F:integrin binding"/>
    <property type="evidence" value="ECO:0000250"/>
    <property type="project" value="UniProtKB"/>
</dbReference>
<dbReference type="GO" id="GO:0008504">
    <property type="term" value="F:monoamine transmembrane transporter activity"/>
    <property type="evidence" value="ECO:0000266"/>
    <property type="project" value="RGD"/>
</dbReference>
<dbReference type="GO" id="GO:0005261">
    <property type="term" value="F:monoatomic cation channel activity"/>
    <property type="evidence" value="ECO:0000314"/>
    <property type="project" value="UniProtKB"/>
</dbReference>
<dbReference type="GO" id="GO:0005326">
    <property type="term" value="F:neurotransmitter transmembrane transporter activity"/>
    <property type="evidence" value="ECO:0000266"/>
    <property type="project" value="RGD"/>
</dbReference>
<dbReference type="GO" id="GO:0050998">
    <property type="term" value="F:nitric-oxide synthase binding"/>
    <property type="evidence" value="ECO:0000266"/>
    <property type="project" value="RGD"/>
</dbReference>
<dbReference type="GO" id="GO:0051378">
    <property type="term" value="F:serotonin binding"/>
    <property type="evidence" value="ECO:0000250"/>
    <property type="project" value="UniProtKB"/>
</dbReference>
<dbReference type="GO" id="GO:0005335">
    <property type="term" value="F:serotonin:sodium:chloride symporter activity"/>
    <property type="evidence" value="ECO:0000314"/>
    <property type="project" value="UniProtKB"/>
</dbReference>
<dbReference type="GO" id="GO:0031402">
    <property type="term" value="F:sodium ion binding"/>
    <property type="evidence" value="ECO:0000250"/>
    <property type="project" value="UniProtKB"/>
</dbReference>
<dbReference type="GO" id="GO:0017075">
    <property type="term" value="F:syntaxin-1 binding"/>
    <property type="evidence" value="ECO:0000353"/>
    <property type="project" value="UniProtKB"/>
</dbReference>
<dbReference type="GO" id="GO:0006865">
    <property type="term" value="P:amino acid transport"/>
    <property type="evidence" value="ECO:0000318"/>
    <property type="project" value="GO_Central"/>
</dbReference>
<dbReference type="GO" id="GO:0048148">
    <property type="term" value="P:behavioral response to cocaine"/>
    <property type="evidence" value="ECO:0000315"/>
    <property type="project" value="RGD"/>
</dbReference>
<dbReference type="GO" id="GO:0048854">
    <property type="term" value="P:brain morphogenesis"/>
    <property type="evidence" value="ECO:0000266"/>
    <property type="project" value="RGD"/>
</dbReference>
<dbReference type="GO" id="GO:0071321">
    <property type="term" value="P:cellular response to cGMP"/>
    <property type="evidence" value="ECO:0000314"/>
    <property type="project" value="RGD"/>
</dbReference>
<dbReference type="GO" id="GO:0071300">
    <property type="term" value="P:cellular response to retinoic acid"/>
    <property type="evidence" value="ECO:0000270"/>
    <property type="project" value="RGD"/>
</dbReference>
<dbReference type="GO" id="GO:0007623">
    <property type="term" value="P:circadian rhythm"/>
    <property type="evidence" value="ECO:0000315"/>
    <property type="project" value="RGD"/>
</dbReference>
<dbReference type="GO" id="GO:1990708">
    <property type="term" value="P:conditioned place preference"/>
    <property type="evidence" value="ECO:0000315"/>
    <property type="project" value="RGD"/>
</dbReference>
<dbReference type="GO" id="GO:0048484">
    <property type="term" value="P:enteric nervous system development"/>
    <property type="evidence" value="ECO:0000266"/>
    <property type="project" value="RGD"/>
</dbReference>
<dbReference type="GO" id="GO:0007626">
    <property type="term" value="P:locomotory behavior"/>
    <property type="evidence" value="ECO:0000303"/>
    <property type="project" value="RGD"/>
</dbReference>
<dbReference type="GO" id="GO:0060179">
    <property type="term" value="P:male mating behavior"/>
    <property type="evidence" value="ECO:0000315"/>
    <property type="project" value="RGD"/>
</dbReference>
<dbReference type="GO" id="GO:0051899">
    <property type="term" value="P:membrane depolarization"/>
    <property type="evidence" value="ECO:0000314"/>
    <property type="project" value="UniProtKB"/>
</dbReference>
<dbReference type="GO" id="GO:0007613">
    <property type="term" value="P:memory"/>
    <property type="evidence" value="ECO:0000315"/>
    <property type="project" value="RGD"/>
</dbReference>
<dbReference type="GO" id="GO:0015844">
    <property type="term" value="P:monoamine transport"/>
    <property type="evidence" value="ECO:0000266"/>
    <property type="project" value="RGD"/>
</dbReference>
<dbReference type="GO" id="GO:0021941">
    <property type="term" value="P:negative regulation of cerebellar granule cell precursor proliferation"/>
    <property type="evidence" value="ECO:0000315"/>
    <property type="project" value="RGD"/>
</dbReference>
<dbReference type="GO" id="GO:0045665">
    <property type="term" value="P:negative regulation of neuron differentiation"/>
    <property type="evidence" value="ECO:0000315"/>
    <property type="project" value="RGD"/>
</dbReference>
<dbReference type="GO" id="GO:0046621">
    <property type="term" value="P:negative regulation of organ growth"/>
    <property type="evidence" value="ECO:0000266"/>
    <property type="project" value="RGD"/>
</dbReference>
<dbReference type="GO" id="GO:0032227">
    <property type="term" value="P:negative regulation of synaptic transmission, dopaminergic"/>
    <property type="evidence" value="ECO:0000315"/>
    <property type="project" value="RGD"/>
</dbReference>
<dbReference type="GO" id="GO:0098810">
    <property type="term" value="P:neurotransmitter reuptake"/>
    <property type="evidence" value="ECO:0000266"/>
    <property type="project" value="RGD"/>
</dbReference>
<dbReference type="GO" id="GO:0006836">
    <property type="term" value="P:neurotransmitter transport"/>
    <property type="evidence" value="ECO:0000266"/>
    <property type="project" value="RGD"/>
</dbReference>
<dbReference type="GO" id="GO:0070527">
    <property type="term" value="P:platelet aggregation"/>
    <property type="evidence" value="ECO:0000250"/>
    <property type="project" value="UniProtKB"/>
</dbReference>
<dbReference type="GO" id="GO:0045787">
    <property type="term" value="P:positive regulation of cell cycle"/>
    <property type="evidence" value="ECO:0000266"/>
    <property type="project" value="RGD"/>
</dbReference>
<dbReference type="GO" id="GO:0010628">
    <property type="term" value="P:positive regulation of gene expression"/>
    <property type="evidence" value="ECO:0000266"/>
    <property type="project" value="RGD"/>
</dbReference>
<dbReference type="GO" id="GO:0014064">
    <property type="term" value="P:positive regulation of serotonin secretion"/>
    <property type="evidence" value="ECO:0000315"/>
    <property type="project" value="RGD"/>
</dbReference>
<dbReference type="GO" id="GO:0090067">
    <property type="term" value="P:regulation of thalamus size"/>
    <property type="evidence" value="ECO:0000250"/>
    <property type="project" value="UniProtKB"/>
</dbReference>
<dbReference type="GO" id="GO:0032355">
    <property type="term" value="P:response to estradiol"/>
    <property type="evidence" value="ECO:0000270"/>
    <property type="project" value="RGD"/>
</dbReference>
<dbReference type="GO" id="GO:0001666">
    <property type="term" value="P:response to hypoxia"/>
    <property type="evidence" value="ECO:0000270"/>
    <property type="project" value="RGD"/>
</dbReference>
<dbReference type="GO" id="GO:0007584">
    <property type="term" value="P:response to nutrient"/>
    <property type="evidence" value="ECO:0000270"/>
    <property type="project" value="RGD"/>
</dbReference>
<dbReference type="GO" id="GO:0009636">
    <property type="term" value="P:response to toxic substance"/>
    <property type="evidence" value="ECO:0000266"/>
    <property type="project" value="RGD"/>
</dbReference>
<dbReference type="GO" id="GO:0009410">
    <property type="term" value="P:response to xenobiotic stimulus"/>
    <property type="evidence" value="ECO:0000270"/>
    <property type="project" value="RGD"/>
</dbReference>
<dbReference type="GO" id="GO:0006837">
    <property type="term" value="P:serotonin transport"/>
    <property type="evidence" value="ECO:0000314"/>
    <property type="project" value="UniProtKB"/>
</dbReference>
<dbReference type="GO" id="GO:0051610">
    <property type="term" value="P:serotonin uptake"/>
    <property type="evidence" value="ECO:0000314"/>
    <property type="project" value="UniProtKB"/>
</dbReference>
<dbReference type="GO" id="GO:0035725">
    <property type="term" value="P:sodium ion transmembrane transport"/>
    <property type="evidence" value="ECO:0000318"/>
    <property type="project" value="GO_Central"/>
</dbReference>
<dbReference type="GO" id="GO:0042310">
    <property type="term" value="P:vasoconstriction"/>
    <property type="evidence" value="ECO:0000315"/>
    <property type="project" value="RGD"/>
</dbReference>
<dbReference type="CDD" id="cd11513">
    <property type="entry name" value="SLC6sbd_SERT"/>
    <property type="match status" value="1"/>
</dbReference>
<dbReference type="InterPro" id="IPR000175">
    <property type="entry name" value="Na/ntran_symport"/>
</dbReference>
<dbReference type="InterPro" id="IPR013086">
    <property type="entry name" value="Na/ntran_symport_serotonin_N"/>
</dbReference>
<dbReference type="InterPro" id="IPR037272">
    <property type="entry name" value="SNS_sf"/>
</dbReference>
<dbReference type="NCBIfam" id="NF037979">
    <property type="entry name" value="Na_transp"/>
    <property type="match status" value="1"/>
</dbReference>
<dbReference type="PANTHER" id="PTHR11616:SF105">
    <property type="entry name" value="SODIUM-DEPENDENT SEROTONIN TRANSPORTER"/>
    <property type="match status" value="1"/>
</dbReference>
<dbReference type="PANTHER" id="PTHR11616">
    <property type="entry name" value="SODIUM/CHLORIDE DEPENDENT TRANSPORTER"/>
    <property type="match status" value="1"/>
</dbReference>
<dbReference type="Pfam" id="PF03491">
    <property type="entry name" value="5HT_transport_N"/>
    <property type="match status" value="1"/>
</dbReference>
<dbReference type="Pfam" id="PF00209">
    <property type="entry name" value="SNF"/>
    <property type="match status" value="1"/>
</dbReference>
<dbReference type="PRINTS" id="PR01203">
    <property type="entry name" value="5HTTRANSPORT"/>
</dbReference>
<dbReference type="PRINTS" id="PR00176">
    <property type="entry name" value="NANEUSMPORT"/>
</dbReference>
<dbReference type="SUPFAM" id="SSF161070">
    <property type="entry name" value="SNF-like"/>
    <property type="match status" value="1"/>
</dbReference>
<dbReference type="PROSITE" id="PS00610">
    <property type="entry name" value="NA_NEUROTRAN_SYMP_1"/>
    <property type="match status" value="1"/>
</dbReference>
<dbReference type="PROSITE" id="PS00754">
    <property type="entry name" value="NA_NEUROTRAN_SYMP_2"/>
    <property type="match status" value="1"/>
</dbReference>
<dbReference type="PROSITE" id="PS50267">
    <property type="entry name" value="NA_NEUROTRAN_SYMP_3"/>
    <property type="match status" value="1"/>
</dbReference>
<accession>P31652</accession>
<accession>P23976</accession>
<sequence length="630" mass="70172">METTPLNSQKVLSECKDREDCQENGVLQKGVPTTADRAEPSQISNGYSAVPSTSAGDEASHSIPAATTTLVAEIRQGERETWGKKMDFLLSVIGYAVDLGNIWRFPYICYQNGGGAFLLPYTIMAIFGGIPLFYMELALGQYHRNGCISIWRKICPIFKGIGYAICIIAFYIASYYNTIIAWALYYLISSLTDRLPWTSCTNSWNTGNCTNYFAQDNITWTLHSTSPAEEFYLRHVLQIHQSKGLQDLGTISWQLTLCIVLIFTVIYFSIWKGVKTSGKVVWVTATFPYIVLSVLLVRGATLPGAWRGVVFYLKPNWQKLLETGVWVDAAAQIFFSLGPGFGVLLAFASYNKFNNNCYQDALVTSVVNCMTSFVSGFVIFTVLGYMAEMRNEDVSEVAKDAGPSLLFITYAEAIANMPASTFFAIIFFLMLITLGLDSTFAGLEGVITAVLDEFPHIWAKRREWFVLIVVITCVLGSLLTLTSGGAYVVTLLEEYATGPAVLTVALIEAVAVSWFYGITQFCSDVKEMLGFSPGWFWRICWVAISPLFLLFIICSFLMSPPQLRLFQYNYPHWSIVLGYCIGMSSVICIPTYIIYRLISTPGTLKERIIKSITPETPTEIPCGDIRMNAV</sequence>
<gene>
    <name type="primary">Slc6a4</name>
</gene>
<comment type="function">
    <text evidence="2 3 7 8 11 12 15 16 17 18 19">Serotonin transporter that cotransports serotonin with one Na(+) ion in exchange for one K(+) ion and possibly one proton in an overall electroneutral transport cycle. Transports serotonin across the plasma membrane from the extracellular compartment to the cytosol thus limiting serotonin intercellular signaling (By similarity) (PubMed:10407194, PubMed:10716733, PubMed:15627510, PubMed:1944572, PubMed:1948036, PubMed:21730057, PubMed:8601815). Essential for serotonin homeostasis in the central nervous system. In the developing somatosensory cortex, acts in glutamatergic neurons to control serotonin uptake and its trophic functions accounting for proper spatial organization of cortical neurons and elaboration of sensory circuits. In the mature cortex, acts primarily in brainstem raphe neurons to mediate serotonin uptake from the synaptic cleft back into the pre-synaptic terminal thus terminating serotonin signaling at the synapse. Modulates mucosal serotonin levels in the gastrointestinal tract through uptake and clearance of serotonin in enterocytes. Required for enteric neurogenesis and gastrointestinal reflexes (By similarity). Regulates blood serotonin levels by ensuring rapid high affinity uptake of serotonin from plasma to platelets, where it is further stored in dense granules via vesicular monoamine transporters and then released upon stimulation (By similarity). Mechanistically, the transport cycle starts with an outward-open conformation having Na1(+) and Cl(-) sites occupied. The binding of a second extracellular Na2(+) ion and serotonin substrate leads to structural changes to outward-occluded to inward-occluded to inward-open, where the Na2(+) ion and serotonin are released into the cytosol. Binding of intracellular K(+) ion induces conformational transitions to inward-occluded to outward-open and completes the cycle by releasing K(+) possibly together with a proton bound to Asp-98 into the extracellular compartment. Na1(+) and Cl(-) ions remain bound throughout the transport cycle (By similarity) (PubMed:10407194, PubMed:10716733, PubMed:15627510, PubMed:1944572, PubMed:1948036, PubMed:21730057, PubMed:8601815). Additionally, displays serotonin-induced channel-like conductance for monovalent cations, mainly Na(+) ions. The channel activity is uncoupled from the transport cycle and may contribute to the membrane resting potential or excitability (PubMed:14642278, PubMed:8968583).</text>
</comment>
<comment type="catalytic activity">
    <reaction evidence="7 8 12 15 16 17 18">
        <text>serotonin(out) + K(+)(in) + Na(+)(out) + H(+)(in) = serotonin(in) + K(+)(out) + Na(+)(in) + H(+)(out)</text>
        <dbReference type="Rhea" id="RHEA:75839"/>
        <dbReference type="ChEBI" id="CHEBI:15378"/>
        <dbReference type="ChEBI" id="CHEBI:29101"/>
        <dbReference type="ChEBI" id="CHEBI:29103"/>
        <dbReference type="ChEBI" id="CHEBI:350546"/>
    </reaction>
    <physiologicalReaction direction="left-to-right" evidence="22 23 24 25 26 27 29">
        <dbReference type="Rhea" id="RHEA:75840"/>
    </physiologicalReaction>
</comment>
<comment type="biophysicochemical properties">
    <kinetics>
        <KM evidence="7">0.29 uM for serotonin</KM>
        <KM evidence="12">21 uM for serotonin</KM>
        <Vmax evidence="7">12.0 pmol/min/mg enzyme for serotonin</Vmax>
    </kinetics>
</comment>
<comment type="subunit">
    <text evidence="2 3 8 9 11 13">Monomer or homooligomer (PubMed:10716733). Interacts with TGFB1I1. Interacts with SEC23A, SEC24C and PATJ. Interacts with NOS1; the interaction may diminish the cell surface localization of SERT in the brain and, correspondingly, reduce serotonin reuptake (By similarity). Interacts (via C-terminus) with SCAMP2; the interaction is direct and retains transporter molecules intracellularly (PubMed:16870614). Interacts with filamentous actin and STX1A (PubMed:11709063). Interacts (via the N-terminus) with STX1A (via the H3 domain); this interaction regulates SLC4A6 channel conductance (PubMed:11709063, PubMed:14642278). Interacts with ITGAV:ITGB3 (By similarity). Interacts (via C-terminus) with ITGB3; this interaction regulates SLC6A4 trafficking (By similarity).</text>
</comment>
<comment type="subcellular location">
    <subcellularLocation>
        <location evidence="9 12 13 16 18">Cell membrane</location>
        <topology evidence="5">Multi-pass membrane protein</topology>
    </subcellularLocation>
    <subcellularLocation>
        <location evidence="13">Endomembrane system</location>
        <topology evidence="5">Multi-pass membrane protein</topology>
    </subcellularLocation>
    <subcellularLocation>
        <location evidence="13">Endosome membrane</location>
        <topology evidence="5">Multi-pass membrane protein</topology>
    </subcellularLocation>
    <subcellularLocation>
        <location evidence="3">Synapse</location>
    </subcellularLocation>
    <subcellularLocation>
        <location evidence="3">Cell junction</location>
        <location evidence="3">Focal adhesion</location>
    </subcellularLocation>
    <subcellularLocation>
        <location evidence="3">Cell projection</location>
        <location evidence="3">Neuron projection</location>
    </subcellularLocation>
    <text evidence="2 3 9 13">Could be part of recycling endosomes (PubMed:16870614). Density of transporter molecules on the plasma membrane is itself regulated by STX1A (PubMed:11709063). Density of transporter molecules on the plasma membrane is also regulated by serotonin (By similarity). Density of transporter molecules seems to be modulated by ITGAV:ITGB3 (By similarity).</text>
</comment>
<comment type="tissue specificity">
    <text evidence="15 18">Expressed in the intestinal crypt epithelial cells and myenteric neurons of the small intestine (at protein level) (PubMed:8601815). Expressed in the brain (PubMed:1944572).</text>
</comment>
<comment type="PTM">
    <text evidence="14">Phosphorylation at Thr-276 increases 5-HT uptake and is required for cGMP-mediated SERT regulation.</text>
</comment>
<comment type="miscellaneous">
    <text>This protein is the target of psychomotor stimulants such as amphetamines or cocaine.</text>
</comment>
<comment type="similarity">
    <text evidence="21">Belongs to the sodium:neurotransmitter symporter (SNF) (TC 2.A.22) family. SLC6A4 subfamily.</text>
</comment>
<comment type="caution">
    <text evidence="10 28">Reported to be glycosylated with sialylated N-glycans and in its sialylated form to interact with MYH9 (PubMed:12944413). However, this publication was retracted due to image duplication in the figures.</text>
</comment>
<organism>
    <name type="scientific">Rattus norvegicus</name>
    <name type="common">Rat</name>
    <dbReference type="NCBI Taxonomy" id="10116"/>
    <lineage>
        <taxon>Eukaryota</taxon>
        <taxon>Metazoa</taxon>
        <taxon>Chordata</taxon>
        <taxon>Craniata</taxon>
        <taxon>Vertebrata</taxon>
        <taxon>Euteleostomi</taxon>
        <taxon>Mammalia</taxon>
        <taxon>Eutheria</taxon>
        <taxon>Euarchontoglires</taxon>
        <taxon>Glires</taxon>
        <taxon>Rodentia</taxon>
        <taxon>Myomorpha</taxon>
        <taxon>Muroidea</taxon>
        <taxon>Muridae</taxon>
        <taxon>Murinae</taxon>
        <taxon>Rattus</taxon>
    </lineage>
</organism>
<proteinExistence type="evidence at protein level"/>
<reference key="1">
    <citation type="journal article" date="1991" name="FEBS Lett.">
        <title>Isolation of cDNAs encoding a novel member of the neurotransmitter transporter gene family.</title>
        <authorList>
            <person name="Mayser W."/>
            <person name="Betz H."/>
            <person name="Schloss P."/>
        </authorList>
    </citation>
    <scope>NUCLEOTIDE SEQUENCE [MRNA]</scope>
    <source>
        <strain>Wistar</strain>
    </source>
</reference>
<reference key="2">
    <citation type="journal article" date="1991" name="Nature">
        <title>Cloning and expression of a functional serotonin transporter from rat brain.</title>
        <authorList>
            <person name="Blakely R.D."/>
            <person name="Berson H.E."/>
            <person name="Fremeau R.T. Jr."/>
            <person name="Caron M.G."/>
            <person name="Peek M.M."/>
            <person name="Prince H.K."/>
            <person name="Bardley C.C."/>
        </authorList>
    </citation>
    <scope>NUCLEOTIDE SEQUENCE [MRNA]</scope>
    <scope>FUNCTION</scope>
    <scope>TISSUE SPECIFICITY</scope>
    <scope>TRANSPORTER ACTIVITY</scope>
    <scope>BIOPHYSICOCHEMICAL PROPERTIES</scope>
    <source>
        <tissue>Brain stem</tissue>
    </source>
</reference>
<reference key="3">
    <citation type="submission" date="1992-07" db="EMBL/GenBank/DDBJ databases">
        <authorList>
            <person name="Blakely R.D."/>
        </authorList>
    </citation>
    <scope>SEQUENCE REVISION</scope>
</reference>
<reference key="4">
    <citation type="journal article" date="1991" name="Science">
        <title>Cloning of a serotonin transporter affected by antidepressants.</title>
        <authorList>
            <person name="Hoffman B.J."/>
            <person name="Mezey E."/>
            <person name="Brownstein M.J."/>
        </authorList>
    </citation>
    <scope>NUCLEOTIDE SEQUENCE [MRNA]</scope>
    <scope>FUNCTION</scope>
    <scope>SUBCELLULAR LOCATION</scope>
    <scope>TRANSPORTER ACTIVITY</scope>
</reference>
<reference key="5">
    <citation type="submission" date="1997-02" db="EMBL/GenBank/DDBJ databases">
        <authorList>
            <person name="Gonzalez A.M."/>
            <person name="Smith A.P.L."/>
            <person name="Emery C.J."/>
            <person name="Higenbottam T.W."/>
        </authorList>
    </citation>
    <scope>NUCLEOTIDE SEQUENCE [MRNA]</scope>
    <source>
        <strain>Fawn hooded</strain>
    </source>
</reference>
<reference key="6">
    <citation type="journal article" date="1996" name="Biophys. J.">
        <title>Single-channel currents produced by the serotonin transporter and analysis of a mutation affecting ion permeation.</title>
        <authorList>
            <person name="Lin F."/>
            <person name="Lester H.A."/>
            <person name="Mager S."/>
        </authorList>
    </citation>
    <scope>FUNCTION</scope>
    <scope>MUTAGENESIS OF ASN-177</scope>
</reference>
<reference key="7">
    <citation type="journal article" date="1996" name="J. Neurosci.">
        <title>Localization and function of a 5-HT transporter in crypt epithelia of the gastrointestinal tract.</title>
        <authorList>
            <person name="Wade P.R."/>
            <person name="Chen J."/>
            <person name="Jaffe B."/>
            <person name="Kassem I.S."/>
            <person name="Blakely R.D."/>
            <person name="Gershon M.D."/>
        </authorList>
    </citation>
    <scope>FUNCTION</scope>
    <scope>TRANSPORTER ACTIVITY</scope>
    <scope>TISSUE SPECIFICITY</scope>
    <scope>SUBCELLULAR LOCATION</scope>
    <source>
        <tissue>Intestinal mucosa</tissue>
    </source>
</reference>
<reference key="8">
    <citation type="journal article" date="1999" name="Brain Res. Mol. Brain Res.">
        <title>Molecular cloning, expression and characterization of a bovine serotonin transporter.</title>
        <authorList>
            <person name="Mortensen O.V."/>
            <person name="Kristensen A.S."/>
            <person name="Rudnick G."/>
            <person name="Wiborg O."/>
        </authorList>
    </citation>
    <scope>FUNCTION</scope>
    <scope>TRANSPORTER ACTIVITY</scope>
    <scope>BIOPHYSICOCHEMICAL PROPERTIES</scope>
</reference>
<reference key="9">
    <citation type="journal article" date="2000" name="Proc. Natl. Acad. Sci. U.S.A.">
        <title>Oligomerization of serotonin transporter and its functional consequences.</title>
        <authorList>
            <person name="Kilic F."/>
            <person name="Rudnick G."/>
        </authorList>
    </citation>
    <scope>MUTAGENESIS OF CYS-109 AND ILE-172</scope>
    <scope>FUNCTION</scope>
    <scope>SUBCELLULAR LOCATION</scope>
    <scope>SUBUNIT</scope>
    <scope>TRANSPORTER ACTIVITY</scope>
</reference>
<reference key="10">
    <citation type="journal article" date="2001" name="Biochem. Soc. Trans.">
        <title>Regulation of the serotonin transporter by interacting proteins.</title>
        <authorList>
            <person name="Haase J."/>
            <person name="Killian A.M."/>
            <person name="Magnani F."/>
            <person name="Williams C."/>
        </authorList>
    </citation>
    <scope>INTERACTION WITH STX1A</scope>
    <scope>SUBCELLULAR LOCATION</scope>
</reference>
<reference key="11">
    <citation type="journal article" date="2003" name="J. Biol. Chem.">
        <title>Glycosyl modification facilitates homo- and hetero-oligomerization of the serotonin transporter. A specific role for sialic acid residues.</title>
        <authorList>
            <person name="Ozaslan D."/>
            <person name="Wang S."/>
            <person name="Ahmed B.A."/>
            <person name="Kocabas A.M."/>
            <person name="McCastlain J.C."/>
            <person name="Bene A."/>
            <person name="Kilic F."/>
        </authorList>
    </citation>
    <scope>RETRACTED PAPER</scope>
</reference>
<reference key="12">
    <citation type="journal article" date="2003" name="Neuron">
        <title>Regulating the conducting states of a mammalian serotonin transporter.</title>
        <authorList>
            <person name="Quick M.W."/>
        </authorList>
    </citation>
    <scope>FUNCTION</scope>
    <scope>INTERACTION WITH STX1A</scope>
    <scope>MUTAGENESIS OF 14-GLU--GLU-23</scope>
</reference>
<reference key="13">
    <citation type="journal article" date="2008" name="J. Clin. Invest.">
        <title>Interactions between integrin alphaIIbbeta3 and the serotonin transporter regulate serotonin transport and platelet aggregation in mice and humans.</title>
        <authorList>
            <person name="Carneiro A.M."/>
            <person name="Cook E.H."/>
            <person name="Murphy D.L."/>
            <person name="Blakely R.D."/>
        </authorList>
    </citation>
    <scope>INTERACTION WITH ITGB3</scope>
</reference>
<reference key="14">
    <citation type="journal article" date="2011" name="J. Biol. Chem.">
        <title>A conserved asparagine residue in transmembrane segment 1 (TM1) of serotonin transporter dictates chloride-coupled neurotransmitter transport.</title>
        <authorList>
            <person name="Henry L.K."/>
            <person name="Iwamoto H."/>
            <person name="Field J.R."/>
            <person name="Kaufmann K."/>
            <person name="Dawson E.S."/>
            <person name="Jacobs M.T."/>
            <person name="Adams C."/>
            <person name="Felts B."/>
            <person name="Zdravkovic I."/>
            <person name="Armstrong V."/>
            <person name="Combs S."/>
            <person name="Solis E. Jr."/>
            <person name="Rudnick G."/>
            <person name="Noskov S.Y."/>
            <person name="DeFelice L.J."/>
            <person name="Meiler J."/>
            <person name="Blakely R.D."/>
        </authorList>
    </citation>
    <scope>FUNCTION</scope>
    <scope>TRANSPORTER ACTIVITY</scope>
    <scope>MUTAGENESIS OF ASN-101; SER-277 AND SER-404</scope>
</reference>
<reference key="15">
    <citation type="journal article" date="2019" name="J. Biol. Chem.">
        <title>Withdrawal: Glycosyl modification facilitates homo- and hetero-oligomerization of the serotonin transporter: a specific role for sialic acid residues.</title>
        <authorList>
            <person name="Ozaslan D."/>
            <person name="Wang S."/>
            <person name="Ahmed B.A."/>
            <person name="Kocabas A.M."/>
            <person name="McCastlain J.C."/>
            <person name="Bene A."/>
            <person name="Kilic F."/>
        </authorList>
    </citation>
    <scope>RETRACTION NOTICE OF PUBMED:12944413</scope>
</reference>
<reference key="16">
    <citation type="journal article" date="2005" name="Neurochem. Int.">
        <title>Role of C-terminal region in the functional regulation of rat serotonin transporter (SERT).</title>
        <authorList>
            <person name="Mochizuki H."/>
            <person name="Amano T."/>
            <person name="Seki T."/>
            <person name="Matsubayashi H."/>
            <person name="Mitsuhata C."/>
            <person name="Morita K."/>
            <person name="Kitayama S."/>
            <person name="Dohi T."/>
            <person name="Mishima H.K."/>
            <person name="Sakai N."/>
        </authorList>
    </citation>
    <scope>FUNCTION</scope>
    <scope>SUBCELLULAR LOCATION</scope>
    <scope>INTERACTION WITH FILAMENTOUS ACTIN</scope>
    <scope>TRANSPORTER ACTIVITY</scope>
    <scope>BIOPHYSICOCHEMICAL PROPERTIES</scope>
</reference>
<reference key="17">
    <citation type="journal article" date="2006" name="J. Biol. Chem.">
        <title>Subcellular redistribution of the serotonin transporter by secretory carrier membrane protein 2.</title>
        <authorList>
            <person name="Mueller H.K."/>
            <person name="Wiborg O."/>
            <person name="Haase J."/>
        </authorList>
    </citation>
    <scope>INTERACTION WITH SCAMP2</scope>
    <scope>SUBCELLULAR LOCATION</scope>
</reference>
<reference key="18">
    <citation type="journal article" date="2007" name="J. Biol. Chem.">
        <title>Phosphorylation of threonine residue 276 is required for acute regulation of serotonin transporter by cyclic GMP.</title>
        <authorList>
            <person name="Ramamoorthy S."/>
            <person name="Samuvel D.J."/>
            <person name="Buck E.R."/>
            <person name="Rudnick G."/>
            <person name="Jayanthi L.D."/>
        </authorList>
    </citation>
    <scope>PHOSPHORYLATION AT THR-276</scope>
</reference>
<evidence type="ECO:0000250" key="1"/>
<evidence type="ECO:0000250" key="2">
    <source>
        <dbReference type="UniProtKB" id="P31645"/>
    </source>
</evidence>
<evidence type="ECO:0000250" key="3">
    <source>
        <dbReference type="UniProtKB" id="Q60857"/>
    </source>
</evidence>
<evidence type="ECO:0000250" key="4">
    <source>
        <dbReference type="UniProtKB" id="Q7K4Y6"/>
    </source>
</evidence>
<evidence type="ECO:0000255" key="5"/>
<evidence type="ECO:0000256" key="6">
    <source>
        <dbReference type="SAM" id="MobiDB-lite"/>
    </source>
</evidence>
<evidence type="ECO:0000269" key="7">
    <source>
    </source>
</evidence>
<evidence type="ECO:0000269" key="8">
    <source>
    </source>
</evidence>
<evidence type="ECO:0000269" key="9">
    <source>
    </source>
</evidence>
<evidence type="ECO:0000269" key="10">
    <source>
    </source>
</evidence>
<evidence type="ECO:0000269" key="11">
    <source>
    </source>
</evidence>
<evidence type="ECO:0000269" key="12">
    <source>
    </source>
</evidence>
<evidence type="ECO:0000269" key="13">
    <source>
    </source>
</evidence>
<evidence type="ECO:0000269" key="14">
    <source>
    </source>
</evidence>
<evidence type="ECO:0000269" key="15">
    <source>
    </source>
</evidence>
<evidence type="ECO:0000269" key="16">
    <source>
    </source>
</evidence>
<evidence type="ECO:0000269" key="17">
    <source>
    </source>
</evidence>
<evidence type="ECO:0000269" key="18">
    <source>
    </source>
</evidence>
<evidence type="ECO:0000269" key="19">
    <source>
    </source>
</evidence>
<evidence type="ECO:0000303" key="20">
    <source>
    </source>
</evidence>
<evidence type="ECO:0000305" key="21"/>
<evidence type="ECO:0000305" key="22">
    <source>
    </source>
</evidence>
<evidence type="ECO:0000305" key="23">
    <source>
    </source>
</evidence>
<evidence type="ECO:0000305" key="24">
    <source>
    </source>
</evidence>
<evidence type="ECO:0000305" key="25">
    <source>
    </source>
</evidence>
<evidence type="ECO:0000305" key="26">
    <source>
    </source>
</evidence>
<evidence type="ECO:0000305" key="27">
    <source>
    </source>
</evidence>
<evidence type="ECO:0000305" key="28">
    <source>
    </source>
</evidence>
<evidence type="ECO:0000305" key="29">
    <source>
    </source>
</evidence>
<name>SC6A4_RAT</name>